<reference key="1">
    <citation type="journal article" date="2011" name="Appl. Environ. Microbiol.">
        <title>Genomic potential of Marinobacter aquaeolei, a biogeochemical 'opportunitroph'.</title>
        <authorList>
            <person name="Singer E."/>
            <person name="Webb E.A."/>
            <person name="Nelson W.C."/>
            <person name="Heidelberg J.F."/>
            <person name="Ivanova N."/>
            <person name="Pati A."/>
            <person name="Edwards K.J."/>
        </authorList>
    </citation>
    <scope>NUCLEOTIDE SEQUENCE [LARGE SCALE GENOMIC DNA]</scope>
    <source>
        <strain>ATCC 700491 / DSM 11845 / VT8</strain>
    </source>
</reference>
<keyword id="KW-0408">Iron</keyword>
<keyword id="KW-0411">Iron-sulfur</keyword>
<keyword id="KW-0479">Metal-binding</keyword>
<comment type="function">
    <text evidence="1">Required for insertion of 4Fe-4S clusters for at least IspG.</text>
</comment>
<comment type="cofactor">
    <cofactor evidence="1">
        <name>iron-sulfur cluster</name>
        <dbReference type="ChEBI" id="CHEBI:30408"/>
    </cofactor>
    <text evidence="1">Binds 1 iron-sulfur cluster per subunit.</text>
</comment>
<comment type="subunit">
    <text evidence="1">Homodimer.</text>
</comment>
<comment type="similarity">
    <text evidence="1">Belongs to the HesB/IscA family.</text>
</comment>
<organism>
    <name type="scientific">Marinobacter nauticus (strain ATCC 700491 / DSM 11845 / VT8)</name>
    <name type="common">Marinobacter aquaeolei</name>
    <dbReference type="NCBI Taxonomy" id="351348"/>
    <lineage>
        <taxon>Bacteria</taxon>
        <taxon>Pseudomonadati</taxon>
        <taxon>Pseudomonadota</taxon>
        <taxon>Gammaproteobacteria</taxon>
        <taxon>Pseudomonadales</taxon>
        <taxon>Marinobacteraceae</taxon>
        <taxon>Marinobacter</taxon>
    </lineage>
</organism>
<dbReference type="EMBL" id="CP000514">
    <property type="protein sequence ID" value="ABM17792.1"/>
    <property type="molecule type" value="Genomic_DNA"/>
</dbReference>
<dbReference type="RefSeq" id="WP_011784224.1">
    <property type="nucleotide sequence ID" value="NC_008740.1"/>
</dbReference>
<dbReference type="SMR" id="A1TYH3"/>
<dbReference type="STRING" id="351348.Maqu_0694"/>
<dbReference type="GeneID" id="31820059"/>
<dbReference type="KEGG" id="maq:Maqu_0694"/>
<dbReference type="eggNOG" id="COG0316">
    <property type="taxonomic scope" value="Bacteria"/>
</dbReference>
<dbReference type="HOGENOM" id="CLU_069054_5_3_6"/>
<dbReference type="Proteomes" id="UP000000998">
    <property type="component" value="Chromosome"/>
</dbReference>
<dbReference type="GO" id="GO:0051537">
    <property type="term" value="F:2 iron, 2 sulfur cluster binding"/>
    <property type="evidence" value="ECO:0007669"/>
    <property type="project" value="TreeGrafter"/>
</dbReference>
<dbReference type="GO" id="GO:0051539">
    <property type="term" value="F:4 iron, 4 sulfur cluster binding"/>
    <property type="evidence" value="ECO:0007669"/>
    <property type="project" value="TreeGrafter"/>
</dbReference>
<dbReference type="GO" id="GO:0005506">
    <property type="term" value="F:iron ion binding"/>
    <property type="evidence" value="ECO:0007669"/>
    <property type="project" value="UniProtKB-UniRule"/>
</dbReference>
<dbReference type="GO" id="GO:0016226">
    <property type="term" value="P:iron-sulfur cluster assembly"/>
    <property type="evidence" value="ECO:0007669"/>
    <property type="project" value="UniProtKB-UniRule"/>
</dbReference>
<dbReference type="FunFam" id="2.60.300.12:FF:000002">
    <property type="entry name" value="Iron-sulfur cluster insertion protein ErpA"/>
    <property type="match status" value="1"/>
</dbReference>
<dbReference type="Gene3D" id="2.60.300.12">
    <property type="entry name" value="HesB-like domain"/>
    <property type="match status" value="1"/>
</dbReference>
<dbReference type="HAMAP" id="MF_01380">
    <property type="entry name" value="Fe_S_insert_ErpA"/>
    <property type="match status" value="1"/>
</dbReference>
<dbReference type="InterPro" id="IPR000361">
    <property type="entry name" value="FeS_biogenesis"/>
</dbReference>
<dbReference type="InterPro" id="IPR016092">
    <property type="entry name" value="FeS_cluster_insertion"/>
</dbReference>
<dbReference type="InterPro" id="IPR017870">
    <property type="entry name" value="FeS_cluster_insertion_CS"/>
</dbReference>
<dbReference type="InterPro" id="IPR023063">
    <property type="entry name" value="FeS_cluster_insertion_RrpA"/>
</dbReference>
<dbReference type="InterPro" id="IPR035903">
    <property type="entry name" value="HesB-like_dom_sf"/>
</dbReference>
<dbReference type="NCBIfam" id="TIGR00049">
    <property type="entry name" value="iron-sulfur cluster assembly accessory protein"/>
    <property type="match status" value="1"/>
</dbReference>
<dbReference type="NCBIfam" id="NF010147">
    <property type="entry name" value="PRK13623.1"/>
    <property type="match status" value="1"/>
</dbReference>
<dbReference type="PANTHER" id="PTHR43011">
    <property type="entry name" value="IRON-SULFUR CLUSTER ASSEMBLY 2 HOMOLOG, MITOCHONDRIAL"/>
    <property type="match status" value="1"/>
</dbReference>
<dbReference type="PANTHER" id="PTHR43011:SF1">
    <property type="entry name" value="IRON-SULFUR CLUSTER ASSEMBLY 2 HOMOLOG, MITOCHONDRIAL"/>
    <property type="match status" value="1"/>
</dbReference>
<dbReference type="Pfam" id="PF01521">
    <property type="entry name" value="Fe-S_biosyn"/>
    <property type="match status" value="1"/>
</dbReference>
<dbReference type="SUPFAM" id="SSF89360">
    <property type="entry name" value="HesB-like domain"/>
    <property type="match status" value="1"/>
</dbReference>
<dbReference type="PROSITE" id="PS01152">
    <property type="entry name" value="HESB"/>
    <property type="match status" value="1"/>
</dbReference>
<protein>
    <recommendedName>
        <fullName evidence="1">Iron-sulfur cluster insertion protein ErpA</fullName>
    </recommendedName>
</protein>
<name>ERPA_MARN8</name>
<gene>
    <name evidence="1" type="primary">erpA</name>
    <name type="ordered locus">Maqu_0694</name>
</gene>
<accession>A1TYH3</accession>
<proteinExistence type="inferred from homology"/>
<evidence type="ECO:0000255" key="1">
    <source>
        <dbReference type="HAMAP-Rule" id="MF_01380"/>
    </source>
</evidence>
<sequence length="110" mass="12026">MATPLFFTDNAVAKVRELIEEEENPDLKLRVFVTGGGCSGFQYGFSFDESQEEDDTVIERDGVKLLVDSMSYQYLVGATIDYQEGLQGSQFVVQNPNASSTCGCGSSFSI</sequence>
<feature type="chain" id="PRO_0000311502" description="Iron-sulfur cluster insertion protein ErpA">
    <location>
        <begin position="1"/>
        <end position="110"/>
    </location>
</feature>
<feature type="binding site" evidence="1">
    <location>
        <position position="38"/>
    </location>
    <ligand>
        <name>iron-sulfur cluster</name>
        <dbReference type="ChEBI" id="CHEBI:30408"/>
    </ligand>
</feature>
<feature type="binding site" evidence="1">
    <location>
        <position position="102"/>
    </location>
    <ligand>
        <name>iron-sulfur cluster</name>
        <dbReference type="ChEBI" id="CHEBI:30408"/>
    </ligand>
</feature>
<feature type="binding site" evidence="1">
    <location>
        <position position="104"/>
    </location>
    <ligand>
        <name>iron-sulfur cluster</name>
        <dbReference type="ChEBI" id="CHEBI:30408"/>
    </ligand>
</feature>